<sequence length="402" mass="44141">MSRVSQARNLGKYFLLIDNMLVVLGFFVVFPLISIRFVDQMGWAALMVGIALGLRQFIQQGLGIFGGAIADRFGAKPMIVTGMLMRAAGFATMGIAHEPWLLWFSCFLSGLGGTLFDPPRSALVVKLIRPEQRGRFFSLLMMQDSAGAVTGALLGSWLLQYDFRLVCATGAVLFVLCAAFNAWLLPAWKLSTVKIPVREGMGRVMADKRFVTYVLTLAGYYMLAVQVMLMLPIMVNDIAGSPSAVKWMYAIEACLSLTLLYPIARWSEKRFRLEHRLMAGLLLMSLSMLPVGLVGNLQQLFTLICTFYIGSVIAEPARETLSASLADARARGSYMGFSRLGLAIGGAIGYIGGGWLFDMGKALQQPELPWMMLGVIGIMTFLALGWQFSHKRTPRGMLEPGA</sequence>
<feature type="chain" id="PRO_1000068675" description="Multidrug resistance protein MdtH">
    <location>
        <begin position="1"/>
        <end position="402"/>
    </location>
</feature>
<feature type="transmembrane region" description="Helical" evidence="1">
    <location>
        <begin position="13"/>
        <end position="33"/>
    </location>
</feature>
<feature type="transmembrane region" description="Helical" evidence="1">
    <location>
        <begin position="45"/>
        <end position="65"/>
    </location>
</feature>
<feature type="transmembrane region" description="Helical" evidence="1">
    <location>
        <begin position="99"/>
        <end position="116"/>
    </location>
</feature>
<feature type="transmembrane region" description="Helical" evidence="1">
    <location>
        <begin position="139"/>
        <end position="159"/>
    </location>
</feature>
<feature type="transmembrane region" description="Helical" evidence="1">
    <location>
        <begin position="165"/>
        <end position="185"/>
    </location>
</feature>
<feature type="transmembrane region" description="Helical" evidence="1">
    <location>
        <begin position="214"/>
        <end position="234"/>
    </location>
</feature>
<feature type="transmembrane region" description="Helical" evidence="1">
    <location>
        <begin position="244"/>
        <end position="264"/>
    </location>
</feature>
<feature type="transmembrane region" description="Helical" evidence="1">
    <location>
        <begin position="277"/>
        <end position="297"/>
    </location>
</feature>
<feature type="transmembrane region" description="Helical" evidence="1">
    <location>
        <begin position="300"/>
        <end position="322"/>
    </location>
</feature>
<feature type="transmembrane region" description="Helical" evidence="1">
    <location>
        <begin position="340"/>
        <end position="360"/>
    </location>
</feature>
<feature type="transmembrane region" description="Helical" evidence="1">
    <location>
        <begin position="368"/>
        <end position="388"/>
    </location>
</feature>
<organism>
    <name type="scientific">Citrobacter koseri (strain ATCC BAA-895 / CDC 4225-83 / SGSC4696)</name>
    <dbReference type="NCBI Taxonomy" id="290338"/>
    <lineage>
        <taxon>Bacteria</taxon>
        <taxon>Pseudomonadati</taxon>
        <taxon>Pseudomonadota</taxon>
        <taxon>Gammaproteobacteria</taxon>
        <taxon>Enterobacterales</taxon>
        <taxon>Enterobacteriaceae</taxon>
        <taxon>Citrobacter</taxon>
    </lineage>
</organism>
<dbReference type="EMBL" id="CP000822">
    <property type="protein sequence ID" value="ABV13123.1"/>
    <property type="molecule type" value="Genomic_DNA"/>
</dbReference>
<dbReference type="RefSeq" id="WP_012132860.1">
    <property type="nucleotide sequence ID" value="NC_009792.1"/>
</dbReference>
<dbReference type="SMR" id="A8AI11"/>
<dbReference type="STRING" id="290338.CKO_01997"/>
<dbReference type="GeneID" id="45135967"/>
<dbReference type="KEGG" id="cko:CKO_01997"/>
<dbReference type="HOGENOM" id="CLU_001265_60_2_6"/>
<dbReference type="OrthoDB" id="56516at2"/>
<dbReference type="Proteomes" id="UP000008148">
    <property type="component" value="Chromosome"/>
</dbReference>
<dbReference type="GO" id="GO:0005886">
    <property type="term" value="C:plasma membrane"/>
    <property type="evidence" value="ECO:0007669"/>
    <property type="project" value="UniProtKB-SubCell"/>
</dbReference>
<dbReference type="GO" id="GO:0022857">
    <property type="term" value="F:transmembrane transporter activity"/>
    <property type="evidence" value="ECO:0007669"/>
    <property type="project" value="UniProtKB-UniRule"/>
</dbReference>
<dbReference type="CDD" id="cd17329">
    <property type="entry name" value="MFS_MdtH_MDR_like"/>
    <property type="match status" value="1"/>
</dbReference>
<dbReference type="FunFam" id="1.20.1250.20:FF:000039">
    <property type="entry name" value="Multidrug resistance protein MdtH"/>
    <property type="match status" value="1"/>
</dbReference>
<dbReference type="Gene3D" id="1.20.1250.20">
    <property type="entry name" value="MFS general substrate transporter like domains"/>
    <property type="match status" value="1"/>
</dbReference>
<dbReference type="HAMAP" id="MF_01529">
    <property type="entry name" value="MFS_MdtH"/>
    <property type="match status" value="1"/>
</dbReference>
<dbReference type="InterPro" id="IPR011701">
    <property type="entry name" value="MFS"/>
</dbReference>
<dbReference type="InterPro" id="IPR020846">
    <property type="entry name" value="MFS_dom"/>
</dbReference>
<dbReference type="InterPro" id="IPR036259">
    <property type="entry name" value="MFS_trans_sf"/>
</dbReference>
<dbReference type="InterPro" id="IPR050171">
    <property type="entry name" value="MFS_Transporters"/>
</dbReference>
<dbReference type="InterPro" id="IPR022855">
    <property type="entry name" value="Multidrug-R_MdtH"/>
</dbReference>
<dbReference type="NCBIfam" id="NF008650">
    <property type="entry name" value="PRK11646.1"/>
    <property type="match status" value="1"/>
</dbReference>
<dbReference type="PANTHER" id="PTHR23517:SF2">
    <property type="entry name" value="MULTIDRUG RESISTANCE PROTEIN MDTH"/>
    <property type="match status" value="1"/>
</dbReference>
<dbReference type="PANTHER" id="PTHR23517">
    <property type="entry name" value="RESISTANCE PROTEIN MDTM, PUTATIVE-RELATED-RELATED"/>
    <property type="match status" value="1"/>
</dbReference>
<dbReference type="Pfam" id="PF07690">
    <property type="entry name" value="MFS_1"/>
    <property type="match status" value="2"/>
</dbReference>
<dbReference type="SUPFAM" id="SSF103473">
    <property type="entry name" value="MFS general substrate transporter"/>
    <property type="match status" value="1"/>
</dbReference>
<dbReference type="PROSITE" id="PS50850">
    <property type="entry name" value="MFS"/>
    <property type="match status" value="1"/>
</dbReference>
<protein>
    <recommendedName>
        <fullName evidence="1">Multidrug resistance protein MdtH</fullName>
    </recommendedName>
</protein>
<reference key="1">
    <citation type="submission" date="2007-08" db="EMBL/GenBank/DDBJ databases">
        <authorList>
            <consortium name="The Citrobacter koseri Genome Sequencing Project"/>
            <person name="McClelland M."/>
            <person name="Sanderson E.K."/>
            <person name="Porwollik S."/>
            <person name="Spieth J."/>
            <person name="Clifton W.S."/>
            <person name="Latreille P."/>
            <person name="Courtney L."/>
            <person name="Wang C."/>
            <person name="Pepin K."/>
            <person name="Bhonagiri V."/>
            <person name="Nash W."/>
            <person name="Johnson M."/>
            <person name="Thiruvilangam P."/>
            <person name="Wilson R."/>
        </authorList>
    </citation>
    <scope>NUCLEOTIDE SEQUENCE [LARGE SCALE GENOMIC DNA]</scope>
    <source>
        <strain>ATCC BAA-895 / CDC 4225-83 / SGSC4696</strain>
    </source>
</reference>
<evidence type="ECO:0000255" key="1">
    <source>
        <dbReference type="HAMAP-Rule" id="MF_01529"/>
    </source>
</evidence>
<accession>A8AI11</accession>
<proteinExistence type="inferred from homology"/>
<keyword id="KW-0997">Cell inner membrane</keyword>
<keyword id="KW-1003">Cell membrane</keyword>
<keyword id="KW-0472">Membrane</keyword>
<keyword id="KW-1185">Reference proteome</keyword>
<keyword id="KW-0812">Transmembrane</keyword>
<keyword id="KW-1133">Transmembrane helix</keyword>
<keyword id="KW-0813">Transport</keyword>
<comment type="subcellular location">
    <subcellularLocation>
        <location evidence="1">Cell inner membrane</location>
        <topology evidence="1">Multi-pass membrane protein</topology>
    </subcellularLocation>
</comment>
<comment type="similarity">
    <text evidence="1">Belongs to the major facilitator superfamily. DHA1 family. MdtH (TC 2.A.1.2.21) subfamily.</text>
</comment>
<name>MDTH_CITK8</name>
<gene>
    <name evidence="1" type="primary">mdtH</name>
    <name type="ordered locus">CKO_01997</name>
</gene>